<organism evidence="11">
    <name type="scientific">Caenorhabditis elegans</name>
    <dbReference type="NCBI Taxonomy" id="6239"/>
    <lineage>
        <taxon>Eukaryota</taxon>
        <taxon>Metazoa</taxon>
        <taxon>Ecdysozoa</taxon>
        <taxon>Nematoda</taxon>
        <taxon>Chromadorea</taxon>
        <taxon>Rhabditida</taxon>
        <taxon>Rhabditina</taxon>
        <taxon>Rhabditomorpha</taxon>
        <taxon>Rhabditoidea</taxon>
        <taxon>Rhabditidae</taxon>
        <taxon>Peloderinae</taxon>
        <taxon>Caenorhabditis</taxon>
    </lineage>
</organism>
<sequence>MMNTLDHRPLGRMETMEGKPDEDEVPTSSNSDAKGKGYYYSSGTVPTDDSTLEEKCQQKTFDPSCPTPKTPVIVPNREFDPNFSTVTENKGWDIFRLLPPKPDRLGHGFWHDASLQVLKLATFLVLFLLTLGSAVVAKSTFILMTSAIGWGGQTITICNQVISEATQNTVKLKNAHVVKWVWATLLALSAPEALCFVRSMHRTMFRNVKRPTFIQFVFVLIIETFHSIGVGILVFRIFPDLDAVTAAQLTNAMCFVPAILSVISRKPNKSALLLVIIDFAAIAAQSSGFWALPMFLPNLQKHLVAIPVSLTLISLAWWQNFVHRDSVFPPVRTLAKFAQRLSERRSKTYAFVSLWKICIYVVCCFLFISSRMKIEDMLQKDPFGEKLLSVAGHDMNQTQIEKFQLRINQMIEQANREAGFYAAAEKKKQPPKKQPKADEAEQVDAGEYMMKRFKRFIGDAGENEEEEPEEEEFSSYNIYSNYVERNQLTMAYDALWLVIFQFGAVFVCYHSSKFACKVMMQRMGFALPMALSVPVTVLLLSTNCRMRQKDSCYGTNVLTVELFWQCNGASMSLADFILTPQTWIWLCWLASQFWITIHLWNPKHERLAKSEKLFILPYYIGAFVDQSLAFNRRRDDKAKIKAEDLEFDAEDSSLTYETIPGLQNKTPPSVCSASSSKLENGLIRDSASSADAITKIYACATMWHETGVEMTCMLKSLFRMDEDQCARRNAQKYLKVIDPDYYEFEAHIFFDDAYDVNEYGEPEINKFVKQIVNVIDQAASAVHQTQMRLKPPKKAKTPYGGKLTYIMPGKNKLFIHLKDNQKIRHRKRWSQVMYLYYLLGYRLMMKVDDPSRKEIISENTFILTLDGDVDFTPSSVYLLVDLMKKNRRLGAACGRIHPRGDGAMVWYQKFEYAIGHWLQKATEHMIGCVMCSPGCFSLFRAYALMDDNVARRYALKSEEPKHFIQYDQGEDRWLCTLLLQRGYRVEYCAASDAQTFAPEGFNEFFNQRRRWIPSTIFNIMDLLKDYRNVVRVNESISIWYIIYQLVMLISSILGPGTIFVMIIGAISISFSIDTLISLVIVSIPVVVFIVVCLTAKPEHQLICAQTIGAIFAMLMTAVVVGTSLQLQKDGLLSPHSMFTVAVATSFLTAAILHPLEFTCIIPGTIYFLAIPCMYMLLPIYSVCNMHTVSWGTREDPRPTEKNTLAKKTPGNLESGDGAGNSENWCTRFLCCGRGTVHPMTMVINEKLNEVIKKVDRLDRKHHPSLARRASILSSTGGTIQIDKCSEADEDEQAEIEDALEMSNQSHAAKKNQKWKQAQSEAWLADKALKRAEREYLEPEEESFWNDVIERYLSPLIMDGKDMDRLRAGLIAIRNSHTVYFLMINIVFIISVLVLQIHKDCLNIEWPLGPKFNHTVRPCYANHDDNQKEEVWVMTRLQLEPIGLVFLIFFVSILVIQFLAMLCHRFGTLAHIIASTELFCFRKTMDRLSEDELVAQNAVEIARELQAIRGIDENAHNIDNPTEDRGISRRRVVQNLESSRKSMMKRKTETLDAAFKKRFFALSSEQTPDPAGFSARDNSKRLTLRKGTIRALEHRRDSLFGTLDNRKDDEVDATSMRGPAQRRLERLFTAQQDQNSPTSDGNRRKSNSRPWDQPTSSATSSGDVELRRF</sequence>
<gene>
    <name evidence="7 12" type="primary">chs-2</name>
    <name evidence="12" type="ORF">F48A11.1</name>
</gene>
<accession>G5EBQ8</accession>
<accession>A0A0K3ATY7</accession>
<evidence type="ECO:0000255" key="1"/>
<evidence type="ECO:0000255" key="2">
    <source>
        <dbReference type="PROSITE-ProRule" id="PRU00498"/>
    </source>
</evidence>
<evidence type="ECO:0000256" key="3">
    <source>
        <dbReference type="SAM" id="MobiDB-lite"/>
    </source>
</evidence>
<evidence type="ECO:0000269" key="4">
    <source>
    </source>
</evidence>
<evidence type="ECO:0000269" key="5">
    <source>
    </source>
</evidence>
<evidence type="ECO:0000269" key="6">
    <source>
    </source>
</evidence>
<evidence type="ECO:0000303" key="7">
    <source>
    </source>
</evidence>
<evidence type="ECO:0000305" key="8"/>
<evidence type="ECO:0000305" key="9">
    <source>
    </source>
</evidence>
<evidence type="ECO:0000312" key="10">
    <source>
        <dbReference type="EMBL" id="AAX62733.1"/>
    </source>
</evidence>
<evidence type="ECO:0000312" key="11">
    <source>
        <dbReference type="Proteomes" id="UP000001940"/>
    </source>
</evidence>
<evidence type="ECO:0000312" key="12">
    <source>
        <dbReference type="WormBase" id="F48A11.1a"/>
    </source>
</evidence>
<evidence type="ECO:0000312" key="13">
    <source>
        <dbReference type="WormBase" id="F48A11.1b"/>
    </source>
</evidence>
<proteinExistence type="evidence at protein level"/>
<reference evidence="10" key="1">
    <citation type="journal article" date="2005" name="Dev. Biol.">
        <title>The chitin synthase genes chs-1 and chs-2 are essential for C. elegans development and responsible for chitin deposition in the eggshell and pharynx, respectively.</title>
        <authorList>
            <person name="Zhang Y."/>
            <person name="Foster J.M."/>
            <person name="Nelson L.S."/>
            <person name="Ma D."/>
            <person name="Carlow C.K."/>
        </authorList>
    </citation>
    <scope>NUCLEOTIDE SEQUENCE [MRNA] (ISOFORM A)</scope>
    <scope>FUNCTION</scope>
    <scope>CATALYTIC ACTIVITY</scope>
    <scope>DEVELOPMENTAL STAGE</scope>
    <scope>DISRUPTION PHENOTYPE</scope>
    <source>
        <strain evidence="10">Bristol N2</strain>
    </source>
</reference>
<reference evidence="11" key="2">
    <citation type="journal article" date="1998" name="Science">
        <title>Genome sequence of the nematode C. elegans: a platform for investigating biology.</title>
        <authorList>
            <consortium name="The C. elegans sequencing consortium"/>
        </authorList>
    </citation>
    <scope>NUCLEOTIDE SEQUENCE [LARGE SCALE GENOMIC DNA]</scope>
    <source>
        <strain evidence="11">Bristol N2</strain>
    </source>
</reference>
<reference evidence="8" key="3">
    <citation type="journal article" date="2001" name="Mol. Genet. Genomics">
        <title>Nematode chitin synthases: gene structure, expression and function in Caenorhabditis elegans and the plant parasitic nematode Meloidogyne artiellia.</title>
        <authorList>
            <person name="Veronico P."/>
            <person name="Gray L.J."/>
            <person name="Jones J.T."/>
            <person name="Bazzicalupo P."/>
            <person name="Arbucci S."/>
            <person name="Cortese M.R."/>
            <person name="Di Vito M."/>
            <person name="De Giorgi C."/>
        </authorList>
    </citation>
    <scope>DEVELOPMENTAL STAGE</scope>
</reference>
<reference evidence="8" key="4">
    <citation type="journal article" date="2005" name="Gene">
        <title>Analysis of chitin synthase function in a plant parasitic nematode, Meloidogyne artiellia, using RNAi.</title>
        <authorList>
            <person name="Fanelli E."/>
            <person name="Di Vito M."/>
            <person name="Jones J.T."/>
            <person name="De Giorgi C."/>
        </authorList>
    </citation>
    <scope>DISRUPTION PHENOTYPE</scope>
</reference>
<name>CHS2_CAEEL</name>
<dbReference type="EC" id="2.4.1.16" evidence="9"/>
<dbReference type="EMBL" id="AY874872">
    <property type="protein sequence ID" value="AAX62733.1"/>
    <property type="molecule type" value="mRNA"/>
</dbReference>
<dbReference type="EMBL" id="BX284602">
    <property type="protein sequence ID" value="CCD71483.1"/>
    <property type="molecule type" value="Genomic_DNA"/>
</dbReference>
<dbReference type="EMBL" id="BX284602">
    <property type="protein sequence ID" value="CTQ86483.1"/>
    <property type="molecule type" value="Genomic_DNA"/>
</dbReference>
<dbReference type="PIR" id="T32452">
    <property type="entry name" value="T32452"/>
</dbReference>
<dbReference type="RefSeq" id="NP_001300544.1">
    <molecule id="G5EBQ8-2"/>
    <property type="nucleotide sequence ID" value="NM_001313615.3"/>
</dbReference>
<dbReference type="RefSeq" id="NP_493682.2">
    <molecule id="G5EBQ8-1"/>
    <property type="nucleotide sequence ID" value="NM_061281.6"/>
</dbReference>
<dbReference type="FunCoup" id="G5EBQ8">
    <property type="interactions" value="36"/>
</dbReference>
<dbReference type="STRING" id="6239.F48A11.1c.1"/>
<dbReference type="CAZy" id="GT2">
    <property type="family name" value="Glycosyltransferase Family 2"/>
</dbReference>
<dbReference type="GlyCosmos" id="G5EBQ8">
    <property type="glycosylation" value="2 sites, No reported glycans"/>
</dbReference>
<dbReference type="PaxDb" id="6239-F48A11.1"/>
<dbReference type="EnsemblMetazoa" id="F48A11.1a.1">
    <molecule id="G5EBQ8-1"/>
    <property type="protein sequence ID" value="F48A11.1a.1"/>
    <property type="gene ID" value="WBGene00000497"/>
</dbReference>
<dbReference type="EnsemblMetazoa" id="F48A11.1b.1">
    <molecule id="G5EBQ8-2"/>
    <property type="protein sequence ID" value="F48A11.1b.1"/>
    <property type="gene ID" value="WBGene00000497"/>
</dbReference>
<dbReference type="GeneID" id="173405"/>
<dbReference type="KEGG" id="cel:CELE_F48A11.1"/>
<dbReference type="AGR" id="WB:WBGene00000497"/>
<dbReference type="CTD" id="173405"/>
<dbReference type="WormBase" id="F48A11.1a">
    <molecule id="G5EBQ8-1"/>
    <property type="protein sequence ID" value="CE39155"/>
    <property type="gene ID" value="WBGene00000497"/>
    <property type="gene designation" value="chs-2"/>
</dbReference>
<dbReference type="WormBase" id="F48A11.1b">
    <molecule id="G5EBQ8-2"/>
    <property type="protein sequence ID" value="CE50690"/>
    <property type="gene ID" value="WBGene00000497"/>
    <property type="gene designation" value="chs-2"/>
</dbReference>
<dbReference type="eggNOG" id="KOG2571">
    <property type="taxonomic scope" value="Eukaryota"/>
</dbReference>
<dbReference type="GeneTree" id="ENSGT00530000064569"/>
<dbReference type="HOGENOM" id="CLU_004002_0_0_1"/>
<dbReference type="InParanoid" id="G5EBQ8"/>
<dbReference type="OrthoDB" id="370884at2759"/>
<dbReference type="PhylomeDB" id="G5EBQ8"/>
<dbReference type="PRO" id="PR:G5EBQ8"/>
<dbReference type="Proteomes" id="UP000001940">
    <property type="component" value="Chromosome II"/>
</dbReference>
<dbReference type="Bgee" id="WBGene00000497">
    <property type="expression patterns" value="Expressed in pharyngeal muscle cell (C elegans) and 3 other cell types or tissues"/>
</dbReference>
<dbReference type="ExpressionAtlas" id="G5EBQ8">
    <property type="expression patterns" value="baseline and differential"/>
</dbReference>
<dbReference type="GO" id="GO:0005886">
    <property type="term" value="C:plasma membrane"/>
    <property type="evidence" value="ECO:0007669"/>
    <property type="project" value="UniProtKB-SubCell"/>
</dbReference>
<dbReference type="GO" id="GO:0004100">
    <property type="term" value="F:chitin synthase activity"/>
    <property type="evidence" value="ECO:0000250"/>
    <property type="project" value="WormBase"/>
</dbReference>
<dbReference type="GO" id="GO:0006031">
    <property type="term" value="P:chitin biosynthetic process"/>
    <property type="evidence" value="ECO:0000315"/>
    <property type="project" value="UniProtKB"/>
</dbReference>
<dbReference type="GO" id="GO:0061063">
    <property type="term" value="P:positive regulation of nematode larval development"/>
    <property type="evidence" value="ECO:0000315"/>
    <property type="project" value="UniProtKB"/>
</dbReference>
<dbReference type="CDD" id="cd04190">
    <property type="entry name" value="Chitin_synth_C"/>
    <property type="match status" value="1"/>
</dbReference>
<dbReference type="FunFam" id="3.90.550.10:FF:000139">
    <property type="entry name" value="Chitin synthase 8"/>
    <property type="match status" value="1"/>
</dbReference>
<dbReference type="InterPro" id="IPR004835">
    <property type="entry name" value="Chitin_synth"/>
</dbReference>
<dbReference type="InterPro" id="IPR055120">
    <property type="entry name" value="Chs-1/2_IV_N"/>
</dbReference>
<dbReference type="InterPro" id="IPR029044">
    <property type="entry name" value="Nucleotide-diphossugar_trans"/>
</dbReference>
<dbReference type="PANTHER" id="PTHR22914">
    <property type="entry name" value="CHITIN SYNTHASE"/>
    <property type="match status" value="1"/>
</dbReference>
<dbReference type="PANTHER" id="PTHR22914:SF42">
    <property type="entry name" value="CHITIN SYNTHASE"/>
    <property type="match status" value="1"/>
</dbReference>
<dbReference type="Pfam" id="PF03142">
    <property type="entry name" value="Chitin_synth_2"/>
    <property type="match status" value="1"/>
</dbReference>
<dbReference type="Pfam" id="PF23000">
    <property type="entry name" value="ChitinSynthase_IV_N"/>
    <property type="match status" value="1"/>
</dbReference>
<dbReference type="SUPFAM" id="SSF53448">
    <property type="entry name" value="Nucleotide-diphospho-sugar transferases"/>
    <property type="match status" value="1"/>
</dbReference>
<keyword id="KW-0025">Alternative splicing</keyword>
<keyword id="KW-1003">Cell membrane</keyword>
<keyword id="KW-0175">Coiled coil</keyword>
<keyword id="KW-0217">Developmental protein</keyword>
<keyword id="KW-0325">Glycoprotein</keyword>
<keyword id="KW-0328">Glycosyltransferase</keyword>
<keyword id="KW-0472">Membrane</keyword>
<keyword id="KW-1185">Reference proteome</keyword>
<keyword id="KW-0808">Transferase</keyword>
<keyword id="KW-0812">Transmembrane</keyword>
<keyword id="KW-1133">Transmembrane helix</keyword>
<protein>
    <recommendedName>
        <fullName evidence="8">Chitin synthase chs-2</fullName>
        <ecNumber evidence="9">2.4.1.16</ecNumber>
    </recommendedName>
    <alternativeName>
        <fullName evidence="8">Chitin-UDP acetyl-glucosaminyl transferase chs-2</fullName>
    </alternativeName>
</protein>
<comment type="function">
    <text evidence="6">May be involved in chitin synthesis in the pharynx during larval development.</text>
</comment>
<comment type="catalytic activity">
    <reaction evidence="9">
        <text>[(1-&gt;4)-N-acetyl-beta-D-glucosaminyl](n) + UDP-N-acetyl-alpha-D-glucosamine = [(1-&gt;4)-N-acetyl-beta-D-glucosaminyl](n+1) + UDP + H(+)</text>
        <dbReference type="Rhea" id="RHEA:16637"/>
        <dbReference type="Rhea" id="RHEA-COMP:9593"/>
        <dbReference type="Rhea" id="RHEA-COMP:9595"/>
        <dbReference type="ChEBI" id="CHEBI:15378"/>
        <dbReference type="ChEBI" id="CHEBI:17029"/>
        <dbReference type="ChEBI" id="CHEBI:57705"/>
        <dbReference type="ChEBI" id="CHEBI:58223"/>
        <dbReference type="EC" id="2.4.1.16"/>
    </reaction>
</comment>
<comment type="subcellular location">
    <subcellularLocation>
        <location evidence="9">Cell membrane</location>
        <topology evidence="1">Multi-pass membrane protein</topology>
    </subcellularLocation>
</comment>
<comment type="alternative products">
    <event type="alternative splicing"/>
    <isoform>
        <id>G5EBQ8-1</id>
        <name evidence="12">a</name>
        <sequence type="displayed"/>
    </isoform>
    <isoform>
        <id>G5EBQ8-2</id>
        <name evidence="13">b</name>
        <sequence type="described" ref="VSP_059315"/>
    </isoform>
</comment>
<comment type="developmental stage">
    <text evidence="4 6">Specifically expressed just prior to each larval molt (PubMed:11589574). Expression is restricted to the pharynx and specifically to the glandular cells g1 and g2 in the terminal bulb, the 3 m4 myo-epithelial cells in the metacorpus and the 3 m3 myo-epithelial cells in the procorpus (PubMed:11589574, PubMed:16098962). Not expressed in adults (PubMed:11589574).</text>
</comment>
<comment type="disruption phenotype">
    <text evidence="5 6">RNAi-mediated knockdown causes a severe delay in larval development with most animals arrested at the L1 larval stage (PubMed:15777697, PubMed:16098962). Arrested larvae have a disorganized and larger pharynx grinder probably causing feeding defects and thus a delayed growth (PubMed:16098962).</text>
</comment>
<comment type="similarity">
    <text evidence="8">Belongs to the chitin synthase family. Class IV subfamily.</text>
</comment>
<feature type="chain" id="PRO_0000443249" description="Chitin synthase chs-2">
    <location>
        <begin position="1"/>
        <end position="1668"/>
    </location>
</feature>
<feature type="topological domain" description="Cytoplasmic" evidence="8">
    <location>
        <begin position="1"/>
        <end position="116"/>
    </location>
</feature>
<feature type="transmembrane region" description="Helical" evidence="1">
    <location>
        <begin position="117"/>
        <end position="137"/>
    </location>
</feature>
<feature type="topological domain" description="Extracellular" evidence="8">
    <location>
        <begin position="138"/>
        <end position="176"/>
    </location>
</feature>
<feature type="transmembrane region" description="Helical" evidence="1">
    <location>
        <begin position="177"/>
        <end position="197"/>
    </location>
</feature>
<feature type="topological domain" description="Cytoplasmic" evidence="8">
    <location>
        <begin position="198"/>
        <end position="212"/>
    </location>
</feature>
<feature type="transmembrane region" description="Helical" evidence="1">
    <location>
        <begin position="213"/>
        <end position="233"/>
    </location>
</feature>
<feature type="topological domain" description="Extracellular" evidence="8">
    <location>
        <begin position="234"/>
        <end position="242"/>
    </location>
</feature>
<feature type="transmembrane region" description="Helical" evidence="1">
    <location>
        <begin position="243"/>
        <end position="263"/>
    </location>
</feature>
<feature type="topological domain" description="Cytoplasmic" evidence="8">
    <location>
        <begin position="264"/>
        <end position="271"/>
    </location>
</feature>
<feature type="transmembrane region" description="Helical" evidence="1">
    <location>
        <begin position="272"/>
        <end position="292"/>
    </location>
</feature>
<feature type="topological domain" description="Extracellular" evidence="8">
    <location>
        <begin position="293"/>
        <end position="301"/>
    </location>
</feature>
<feature type="transmembrane region" description="Helical" evidence="1">
    <location>
        <begin position="302"/>
        <end position="322"/>
    </location>
</feature>
<feature type="topological domain" description="Cytoplasmic" evidence="8">
    <location>
        <begin position="323"/>
        <end position="347"/>
    </location>
</feature>
<feature type="transmembrane region" description="Helical" evidence="1">
    <location>
        <begin position="348"/>
        <end position="368"/>
    </location>
</feature>
<feature type="topological domain" description="Extracellular" evidence="8">
    <location>
        <begin position="369"/>
        <end position="487"/>
    </location>
</feature>
<feature type="transmembrane region" description="Helical" evidence="1">
    <location>
        <begin position="488"/>
        <end position="508"/>
    </location>
</feature>
<feature type="topological domain" description="Cytoplasmic" evidence="8">
    <location>
        <begin position="509"/>
        <end position="522"/>
    </location>
</feature>
<feature type="transmembrane region" description="Helical" evidence="1">
    <location>
        <begin position="523"/>
        <end position="543"/>
    </location>
</feature>
<feature type="topological domain" description="Extracellular" evidence="8">
    <location>
        <begin position="544"/>
        <end position="576"/>
    </location>
</feature>
<feature type="transmembrane region" description="Helical" evidence="1">
    <location>
        <begin position="577"/>
        <end position="597"/>
    </location>
</feature>
<feature type="topological domain" description="Cytoplasmic" evidence="8">
    <location>
        <begin position="598"/>
        <end position="1045"/>
    </location>
</feature>
<feature type="transmembrane region" description="Helical" evidence="1">
    <location>
        <begin position="1046"/>
        <end position="1066"/>
    </location>
</feature>
<feature type="topological domain" description="Extracellular" evidence="8">
    <location>
        <begin position="1067"/>
        <end position="1074"/>
    </location>
</feature>
<feature type="transmembrane region" description="Helical" evidence="1">
    <location>
        <begin position="1075"/>
        <end position="1095"/>
    </location>
</feature>
<feature type="topological domain" description="Cytoplasmic" evidence="8">
    <location>
        <begin position="1096"/>
        <end position="1100"/>
    </location>
</feature>
<feature type="transmembrane region" description="Helical" evidence="1">
    <location>
        <begin position="1101"/>
        <end position="1121"/>
    </location>
</feature>
<feature type="topological domain" description="Extracellular" evidence="8">
    <location>
        <begin position="1122"/>
        <end position="1136"/>
    </location>
</feature>
<feature type="transmembrane region" description="Helical" evidence="1">
    <location>
        <begin position="1137"/>
        <end position="1157"/>
    </location>
</feature>
<feature type="topological domain" description="Cytoplasmic" evidence="8">
    <location>
        <position position="1158"/>
    </location>
</feature>
<feature type="transmembrane region" description="Helical" evidence="1">
    <location>
        <begin position="1159"/>
        <end position="1179"/>
    </location>
</feature>
<feature type="topological domain" description="Extracellular" evidence="8">
    <location>
        <begin position="1180"/>
        <end position="1375"/>
    </location>
</feature>
<feature type="transmembrane region" description="Helical" evidence="1">
    <location>
        <begin position="1376"/>
        <end position="1396"/>
    </location>
</feature>
<feature type="topological domain" description="Cytoplasmic" evidence="8">
    <location>
        <begin position="1397"/>
        <end position="1440"/>
    </location>
</feature>
<feature type="transmembrane region" description="Helical" evidence="1">
    <location>
        <begin position="1441"/>
        <end position="1461"/>
    </location>
</feature>
<feature type="topological domain" description="Extracellular" evidence="8">
    <location>
        <begin position="1462"/>
        <end position="1668"/>
    </location>
</feature>
<feature type="region of interest" description="Disordered" evidence="3">
    <location>
        <begin position="1"/>
        <end position="51"/>
    </location>
</feature>
<feature type="region of interest" description="Disordered" evidence="3">
    <location>
        <begin position="1192"/>
        <end position="1216"/>
    </location>
</feature>
<feature type="region of interest" description="Disordered" evidence="3">
    <location>
        <begin position="1625"/>
        <end position="1668"/>
    </location>
</feature>
<feature type="coiled-coil region" evidence="1">
    <location>
        <begin position="1280"/>
        <end position="1335"/>
    </location>
</feature>
<feature type="compositionally biased region" description="Basic and acidic residues" evidence="3">
    <location>
        <begin position="1"/>
        <end position="19"/>
    </location>
</feature>
<feature type="compositionally biased region" description="Polar residues" evidence="3">
    <location>
        <begin position="1628"/>
        <end position="1639"/>
    </location>
</feature>
<feature type="compositionally biased region" description="Polar residues" evidence="3">
    <location>
        <begin position="1647"/>
        <end position="1661"/>
    </location>
</feature>
<feature type="glycosylation site" description="N-linked (GlcNAc...) asparagine" evidence="2">
    <location>
        <position position="396"/>
    </location>
</feature>
<feature type="glycosylation site" description="N-linked (GlcNAc...) asparagine" evidence="2">
    <location>
        <position position="1303"/>
    </location>
</feature>
<feature type="splice variant" id="VSP_059315" description="In isoform b." evidence="8">
    <original>MNTLDHRPLGRMETMEGKPDEDEVPTSSNSDAKGKGYYYSSGTVPTDDSTLEEKCQQKTFDPSCPTPKTPVIVPNREFDPNFSTV</original>
    <variation>DRTMDRRDRDDNHSNYYIAEGTV</variation>
    <location>
        <begin position="2"/>
        <end position="86"/>
    </location>
</feature>